<protein>
    <recommendedName>
        <fullName evidence="1">4-hydroxy-3-methylbut-2-en-1-yl diphosphate synthase (flavodoxin)</fullName>
        <ecNumber evidence="1">1.17.7.3</ecNumber>
    </recommendedName>
    <alternativeName>
        <fullName evidence="1">1-hydroxy-2-methyl-2-(E)-butenyl 4-diphosphate synthase</fullName>
    </alternativeName>
</protein>
<accession>A5FX97</accession>
<organism>
    <name type="scientific">Acidiphilium cryptum (strain JF-5)</name>
    <dbReference type="NCBI Taxonomy" id="349163"/>
    <lineage>
        <taxon>Bacteria</taxon>
        <taxon>Pseudomonadati</taxon>
        <taxon>Pseudomonadota</taxon>
        <taxon>Alphaproteobacteria</taxon>
        <taxon>Acetobacterales</taxon>
        <taxon>Acidocellaceae</taxon>
        <taxon>Acidiphilium</taxon>
    </lineage>
</organism>
<gene>
    <name evidence="1" type="primary">ispG</name>
    <name type="ordered locus">Acry_1012</name>
</gene>
<keyword id="KW-0004">4Fe-4S</keyword>
<keyword id="KW-0408">Iron</keyword>
<keyword id="KW-0411">Iron-sulfur</keyword>
<keyword id="KW-0414">Isoprene biosynthesis</keyword>
<keyword id="KW-0479">Metal-binding</keyword>
<keyword id="KW-0560">Oxidoreductase</keyword>
<keyword id="KW-1185">Reference proteome</keyword>
<sequence>MNYREYQQIVRRKSRQISVGPVKVGGDAPITVQTMTNTPTDDVAATVAQIHRAERAGVDIVRVSCPDEAATAALADIVRQVNVPIVADIHFHYRRAIEAAKAGAACLRINPGNIGSAERVREVVAAARDHGCSIRIGVNAGSLEKHLLEKYGEPNPDALVESALEHAKILQDHDFHEFKISVKASDVFMAVAAYQQLAEVCDHPLHIGITEAGGRRTGTVKSSIGLGSLLWAGIGDTMRVSLSAEPEEEVAVGWDILKSLGIRHRGVRVISCPSCARQGFNVIDTVAQLEDRLAHIEEPITLSIIGCVVNGPGEALMTDLGVTGGGNGRHMVYAAGKTDHTIEGAAMIDHVVELVEQRAARLREEKAAAKQAAE</sequence>
<comment type="function">
    <text evidence="1">Converts 2C-methyl-D-erythritol 2,4-cyclodiphosphate (ME-2,4cPP) into 1-hydroxy-2-methyl-2-(E)-butenyl 4-diphosphate.</text>
</comment>
<comment type="catalytic activity">
    <reaction evidence="1">
        <text>(2E)-4-hydroxy-3-methylbut-2-enyl diphosphate + oxidized [flavodoxin] + H2O + 2 H(+) = 2-C-methyl-D-erythritol 2,4-cyclic diphosphate + reduced [flavodoxin]</text>
        <dbReference type="Rhea" id="RHEA:43604"/>
        <dbReference type="Rhea" id="RHEA-COMP:10622"/>
        <dbReference type="Rhea" id="RHEA-COMP:10623"/>
        <dbReference type="ChEBI" id="CHEBI:15377"/>
        <dbReference type="ChEBI" id="CHEBI:15378"/>
        <dbReference type="ChEBI" id="CHEBI:57618"/>
        <dbReference type="ChEBI" id="CHEBI:58210"/>
        <dbReference type="ChEBI" id="CHEBI:58483"/>
        <dbReference type="ChEBI" id="CHEBI:128753"/>
        <dbReference type="EC" id="1.17.7.3"/>
    </reaction>
</comment>
<comment type="cofactor">
    <cofactor evidence="1">
        <name>[4Fe-4S] cluster</name>
        <dbReference type="ChEBI" id="CHEBI:49883"/>
    </cofactor>
    <text evidence="1">Binds 1 [4Fe-4S] cluster.</text>
</comment>
<comment type="pathway">
    <text evidence="1">Isoprenoid biosynthesis; isopentenyl diphosphate biosynthesis via DXP pathway; isopentenyl diphosphate from 1-deoxy-D-xylulose 5-phosphate: step 5/6.</text>
</comment>
<comment type="similarity">
    <text evidence="1">Belongs to the IspG family.</text>
</comment>
<reference key="1">
    <citation type="submission" date="2007-05" db="EMBL/GenBank/DDBJ databases">
        <title>Complete sequence of chromosome of Acidiphilium cryptum JF-5.</title>
        <authorList>
            <consortium name="US DOE Joint Genome Institute"/>
            <person name="Copeland A."/>
            <person name="Lucas S."/>
            <person name="Lapidus A."/>
            <person name="Barry K."/>
            <person name="Detter J.C."/>
            <person name="Glavina del Rio T."/>
            <person name="Hammon N."/>
            <person name="Israni S."/>
            <person name="Dalin E."/>
            <person name="Tice H."/>
            <person name="Pitluck S."/>
            <person name="Sims D."/>
            <person name="Brettin T."/>
            <person name="Bruce D."/>
            <person name="Han C."/>
            <person name="Schmutz J."/>
            <person name="Larimer F."/>
            <person name="Land M."/>
            <person name="Hauser L."/>
            <person name="Kyrpides N."/>
            <person name="Kim E."/>
            <person name="Magnuson T."/>
            <person name="Richardson P."/>
        </authorList>
    </citation>
    <scope>NUCLEOTIDE SEQUENCE [LARGE SCALE GENOMIC DNA]</scope>
    <source>
        <strain>JF-5</strain>
    </source>
</reference>
<evidence type="ECO:0000255" key="1">
    <source>
        <dbReference type="HAMAP-Rule" id="MF_00159"/>
    </source>
</evidence>
<feature type="chain" id="PRO_1000203499" description="4-hydroxy-3-methylbut-2-en-1-yl diphosphate synthase (flavodoxin)">
    <location>
        <begin position="1"/>
        <end position="374"/>
    </location>
</feature>
<feature type="binding site" evidence="1">
    <location>
        <position position="272"/>
    </location>
    <ligand>
        <name>[4Fe-4S] cluster</name>
        <dbReference type="ChEBI" id="CHEBI:49883"/>
    </ligand>
</feature>
<feature type="binding site" evidence="1">
    <location>
        <position position="275"/>
    </location>
    <ligand>
        <name>[4Fe-4S] cluster</name>
        <dbReference type="ChEBI" id="CHEBI:49883"/>
    </ligand>
</feature>
<feature type="binding site" evidence="1">
    <location>
        <position position="307"/>
    </location>
    <ligand>
        <name>[4Fe-4S] cluster</name>
        <dbReference type="ChEBI" id="CHEBI:49883"/>
    </ligand>
</feature>
<feature type="binding site" evidence="1">
    <location>
        <position position="314"/>
    </location>
    <ligand>
        <name>[4Fe-4S] cluster</name>
        <dbReference type="ChEBI" id="CHEBI:49883"/>
    </ligand>
</feature>
<name>ISPG_ACICJ</name>
<dbReference type="EC" id="1.17.7.3" evidence="1"/>
<dbReference type="EMBL" id="CP000697">
    <property type="protein sequence ID" value="ABQ30229.1"/>
    <property type="molecule type" value="Genomic_DNA"/>
</dbReference>
<dbReference type="RefSeq" id="WP_011941926.1">
    <property type="nucleotide sequence ID" value="NC_009484.1"/>
</dbReference>
<dbReference type="SMR" id="A5FX97"/>
<dbReference type="STRING" id="349163.Acry_1012"/>
<dbReference type="KEGG" id="acr:Acry_1012"/>
<dbReference type="eggNOG" id="COG0821">
    <property type="taxonomic scope" value="Bacteria"/>
</dbReference>
<dbReference type="HOGENOM" id="CLU_042258_0_0_5"/>
<dbReference type="UniPathway" id="UPA00056">
    <property type="reaction ID" value="UER00096"/>
</dbReference>
<dbReference type="Proteomes" id="UP000000245">
    <property type="component" value="Chromosome"/>
</dbReference>
<dbReference type="GO" id="GO:0051539">
    <property type="term" value="F:4 iron, 4 sulfur cluster binding"/>
    <property type="evidence" value="ECO:0007669"/>
    <property type="project" value="UniProtKB-UniRule"/>
</dbReference>
<dbReference type="GO" id="GO:0046429">
    <property type="term" value="F:4-hydroxy-3-methylbut-2-en-1-yl diphosphate synthase activity (ferredoxin)"/>
    <property type="evidence" value="ECO:0007669"/>
    <property type="project" value="UniProtKB-UniRule"/>
</dbReference>
<dbReference type="GO" id="GO:0141197">
    <property type="term" value="F:4-hydroxy-3-methylbut-2-enyl-diphosphate synthase activity (flavodoxin)"/>
    <property type="evidence" value="ECO:0007669"/>
    <property type="project" value="UniProtKB-EC"/>
</dbReference>
<dbReference type="GO" id="GO:0005506">
    <property type="term" value="F:iron ion binding"/>
    <property type="evidence" value="ECO:0007669"/>
    <property type="project" value="InterPro"/>
</dbReference>
<dbReference type="GO" id="GO:0019288">
    <property type="term" value="P:isopentenyl diphosphate biosynthetic process, methylerythritol 4-phosphate pathway"/>
    <property type="evidence" value="ECO:0007669"/>
    <property type="project" value="UniProtKB-UniRule"/>
</dbReference>
<dbReference type="GO" id="GO:0016114">
    <property type="term" value="P:terpenoid biosynthetic process"/>
    <property type="evidence" value="ECO:0007669"/>
    <property type="project" value="InterPro"/>
</dbReference>
<dbReference type="FunFam" id="3.20.20.20:FF:000001">
    <property type="entry name" value="4-hydroxy-3-methylbut-2-en-1-yl diphosphate synthase (flavodoxin)"/>
    <property type="match status" value="1"/>
</dbReference>
<dbReference type="Gene3D" id="3.20.20.20">
    <property type="entry name" value="Dihydropteroate synthase-like"/>
    <property type="match status" value="1"/>
</dbReference>
<dbReference type="Gene3D" id="3.30.413.10">
    <property type="entry name" value="Sulfite Reductase Hemoprotein, domain 1"/>
    <property type="match status" value="1"/>
</dbReference>
<dbReference type="HAMAP" id="MF_00159">
    <property type="entry name" value="IspG"/>
    <property type="match status" value="1"/>
</dbReference>
<dbReference type="InterPro" id="IPR011005">
    <property type="entry name" value="Dihydropteroate_synth-like_sf"/>
</dbReference>
<dbReference type="InterPro" id="IPR016425">
    <property type="entry name" value="IspG_bac"/>
</dbReference>
<dbReference type="InterPro" id="IPR004588">
    <property type="entry name" value="IspG_bac-typ"/>
</dbReference>
<dbReference type="InterPro" id="IPR045854">
    <property type="entry name" value="NO2/SO3_Rdtase_4Fe4S_sf"/>
</dbReference>
<dbReference type="NCBIfam" id="TIGR00612">
    <property type="entry name" value="ispG_gcpE"/>
    <property type="match status" value="1"/>
</dbReference>
<dbReference type="NCBIfam" id="NF001540">
    <property type="entry name" value="PRK00366.1"/>
    <property type="match status" value="1"/>
</dbReference>
<dbReference type="PANTHER" id="PTHR30454">
    <property type="entry name" value="4-HYDROXY-3-METHYLBUT-2-EN-1-YL DIPHOSPHATE SYNTHASE"/>
    <property type="match status" value="1"/>
</dbReference>
<dbReference type="PANTHER" id="PTHR30454:SF0">
    <property type="entry name" value="4-HYDROXY-3-METHYLBUT-2-EN-1-YL DIPHOSPHATE SYNTHASE (FERREDOXIN), CHLOROPLASTIC"/>
    <property type="match status" value="1"/>
</dbReference>
<dbReference type="Pfam" id="PF04551">
    <property type="entry name" value="GcpE"/>
    <property type="match status" value="1"/>
</dbReference>
<dbReference type="PIRSF" id="PIRSF004640">
    <property type="entry name" value="IspG"/>
    <property type="match status" value="1"/>
</dbReference>
<dbReference type="SUPFAM" id="SSF51412">
    <property type="entry name" value="Inosine monophosphate dehydrogenase (IMPDH)"/>
    <property type="match status" value="1"/>
</dbReference>
<dbReference type="SUPFAM" id="SSF56014">
    <property type="entry name" value="Nitrite and sulphite reductase 4Fe-4S domain-like"/>
    <property type="match status" value="1"/>
</dbReference>
<proteinExistence type="inferred from homology"/>